<proteinExistence type="inferred from homology"/>
<organism>
    <name type="scientific">Escherichia coli O6:K15:H31 (strain 536 / UPEC)</name>
    <dbReference type="NCBI Taxonomy" id="362663"/>
    <lineage>
        <taxon>Bacteria</taxon>
        <taxon>Pseudomonadati</taxon>
        <taxon>Pseudomonadota</taxon>
        <taxon>Gammaproteobacteria</taxon>
        <taxon>Enterobacterales</taxon>
        <taxon>Enterobacteriaceae</taxon>
        <taxon>Escherichia</taxon>
    </lineage>
</organism>
<keyword id="KW-0240">DNA-directed RNA polymerase</keyword>
<keyword id="KW-0548">Nucleotidyltransferase</keyword>
<keyword id="KW-0804">Transcription</keyword>
<keyword id="KW-0808">Transferase</keyword>
<gene>
    <name evidence="1" type="primary">rpoA</name>
    <name type="ordered locus">ECP_3383</name>
</gene>
<sequence length="329" mass="36512">MQGSVTEFLKPRLVDIEQVSSTHAKVTLEPLERGFGHTLGNALRRILLSSMPGCAVTEVEIDGVLHEYSTKEGVQEDILEILLNLKGLAVRVQGKDEVILTLNKSGIGPVTAADITHDGDVEIVKPQHVICHLTDENASISMRIKVQRGRGYVPASTRIHSEEDERPIGRLLVDACYSPVERIAYNVEAARVEQRTDLDKLVIEMETNGTIDPEEAIRRAATILAEQLEAFVDLRDVRQPEVKEEKPEFDPILLRPVDDLELTVRSANCLKAEAIHYIGDLVQRTEVELLKTPNLGKKSLTEIKDVLASRGLSLGMRLENWPPASIADE</sequence>
<feature type="chain" id="PRO_0000264500" description="DNA-directed RNA polymerase subunit alpha">
    <location>
        <begin position="1"/>
        <end position="329"/>
    </location>
</feature>
<feature type="region of interest" description="Alpha N-terminal domain (alpha-NTD)" evidence="1">
    <location>
        <begin position="1"/>
        <end position="235"/>
    </location>
</feature>
<feature type="region of interest" description="Alpha C-terminal domain (alpha-CTD)" evidence="1">
    <location>
        <begin position="249"/>
        <end position="329"/>
    </location>
</feature>
<dbReference type="EC" id="2.7.7.6" evidence="1"/>
<dbReference type="EMBL" id="CP000247">
    <property type="protein sequence ID" value="ABG71363.1"/>
    <property type="molecule type" value="Genomic_DNA"/>
</dbReference>
<dbReference type="RefSeq" id="WP_001162094.1">
    <property type="nucleotide sequence ID" value="NC_008253.1"/>
</dbReference>
<dbReference type="SMR" id="Q0TCG6"/>
<dbReference type="GeneID" id="93778692"/>
<dbReference type="KEGG" id="ecp:ECP_3383"/>
<dbReference type="HOGENOM" id="CLU_053084_0_0_6"/>
<dbReference type="Proteomes" id="UP000009182">
    <property type="component" value="Chromosome"/>
</dbReference>
<dbReference type="GO" id="GO:0005737">
    <property type="term" value="C:cytoplasm"/>
    <property type="evidence" value="ECO:0007669"/>
    <property type="project" value="UniProtKB-ARBA"/>
</dbReference>
<dbReference type="GO" id="GO:0000428">
    <property type="term" value="C:DNA-directed RNA polymerase complex"/>
    <property type="evidence" value="ECO:0007669"/>
    <property type="project" value="UniProtKB-KW"/>
</dbReference>
<dbReference type="GO" id="GO:0003677">
    <property type="term" value="F:DNA binding"/>
    <property type="evidence" value="ECO:0007669"/>
    <property type="project" value="UniProtKB-UniRule"/>
</dbReference>
<dbReference type="GO" id="GO:0003899">
    <property type="term" value="F:DNA-directed RNA polymerase activity"/>
    <property type="evidence" value="ECO:0007669"/>
    <property type="project" value="UniProtKB-UniRule"/>
</dbReference>
<dbReference type="GO" id="GO:0046983">
    <property type="term" value="F:protein dimerization activity"/>
    <property type="evidence" value="ECO:0007669"/>
    <property type="project" value="InterPro"/>
</dbReference>
<dbReference type="GO" id="GO:0006351">
    <property type="term" value="P:DNA-templated transcription"/>
    <property type="evidence" value="ECO:0007669"/>
    <property type="project" value="UniProtKB-UniRule"/>
</dbReference>
<dbReference type="CDD" id="cd06928">
    <property type="entry name" value="RNAP_alpha_NTD"/>
    <property type="match status" value="1"/>
</dbReference>
<dbReference type="FunFam" id="1.10.150.20:FF:000001">
    <property type="entry name" value="DNA-directed RNA polymerase subunit alpha"/>
    <property type="match status" value="1"/>
</dbReference>
<dbReference type="FunFam" id="2.170.120.12:FF:000001">
    <property type="entry name" value="DNA-directed RNA polymerase subunit alpha"/>
    <property type="match status" value="1"/>
</dbReference>
<dbReference type="Gene3D" id="1.10.150.20">
    <property type="entry name" value="5' to 3' exonuclease, C-terminal subdomain"/>
    <property type="match status" value="1"/>
</dbReference>
<dbReference type="Gene3D" id="2.170.120.12">
    <property type="entry name" value="DNA-directed RNA polymerase, insert domain"/>
    <property type="match status" value="1"/>
</dbReference>
<dbReference type="Gene3D" id="3.30.1360.10">
    <property type="entry name" value="RNA polymerase, RBP11-like subunit"/>
    <property type="match status" value="1"/>
</dbReference>
<dbReference type="HAMAP" id="MF_00059">
    <property type="entry name" value="RNApol_bact_RpoA"/>
    <property type="match status" value="1"/>
</dbReference>
<dbReference type="InterPro" id="IPR011262">
    <property type="entry name" value="DNA-dir_RNA_pol_insert"/>
</dbReference>
<dbReference type="InterPro" id="IPR011263">
    <property type="entry name" value="DNA-dir_RNA_pol_RpoA/D/Rpb3"/>
</dbReference>
<dbReference type="InterPro" id="IPR011773">
    <property type="entry name" value="DNA-dir_RpoA"/>
</dbReference>
<dbReference type="InterPro" id="IPR036603">
    <property type="entry name" value="RBP11-like"/>
</dbReference>
<dbReference type="InterPro" id="IPR011260">
    <property type="entry name" value="RNAP_asu_C"/>
</dbReference>
<dbReference type="InterPro" id="IPR036643">
    <property type="entry name" value="RNApol_insert_sf"/>
</dbReference>
<dbReference type="NCBIfam" id="NF003513">
    <property type="entry name" value="PRK05182.1-2"/>
    <property type="match status" value="1"/>
</dbReference>
<dbReference type="NCBIfam" id="NF003519">
    <property type="entry name" value="PRK05182.2-5"/>
    <property type="match status" value="1"/>
</dbReference>
<dbReference type="NCBIfam" id="TIGR02027">
    <property type="entry name" value="rpoA"/>
    <property type="match status" value="1"/>
</dbReference>
<dbReference type="Pfam" id="PF01000">
    <property type="entry name" value="RNA_pol_A_bac"/>
    <property type="match status" value="1"/>
</dbReference>
<dbReference type="Pfam" id="PF03118">
    <property type="entry name" value="RNA_pol_A_CTD"/>
    <property type="match status" value="1"/>
</dbReference>
<dbReference type="Pfam" id="PF01193">
    <property type="entry name" value="RNA_pol_L"/>
    <property type="match status" value="1"/>
</dbReference>
<dbReference type="SMART" id="SM00662">
    <property type="entry name" value="RPOLD"/>
    <property type="match status" value="1"/>
</dbReference>
<dbReference type="SUPFAM" id="SSF47789">
    <property type="entry name" value="C-terminal domain of RNA polymerase alpha subunit"/>
    <property type="match status" value="1"/>
</dbReference>
<dbReference type="SUPFAM" id="SSF56553">
    <property type="entry name" value="Insert subdomain of RNA polymerase alpha subunit"/>
    <property type="match status" value="1"/>
</dbReference>
<dbReference type="SUPFAM" id="SSF55257">
    <property type="entry name" value="RBP11-like subunits of RNA polymerase"/>
    <property type="match status" value="1"/>
</dbReference>
<comment type="function">
    <text evidence="1">DNA-dependent RNA polymerase catalyzes the transcription of DNA into RNA using the four ribonucleoside triphosphates as substrates.</text>
</comment>
<comment type="catalytic activity">
    <reaction evidence="1">
        <text>RNA(n) + a ribonucleoside 5'-triphosphate = RNA(n+1) + diphosphate</text>
        <dbReference type="Rhea" id="RHEA:21248"/>
        <dbReference type="Rhea" id="RHEA-COMP:14527"/>
        <dbReference type="Rhea" id="RHEA-COMP:17342"/>
        <dbReference type="ChEBI" id="CHEBI:33019"/>
        <dbReference type="ChEBI" id="CHEBI:61557"/>
        <dbReference type="ChEBI" id="CHEBI:140395"/>
        <dbReference type="EC" id="2.7.7.6"/>
    </reaction>
</comment>
<comment type="subunit">
    <text evidence="1">Homodimer. The RNAP catalytic core consists of 2 alpha, 1 beta, 1 beta' and 1 omega subunit. When a sigma factor is associated with the core the holoenzyme is formed, which can initiate transcription.</text>
</comment>
<comment type="domain">
    <text evidence="1">The N-terminal domain is essential for RNAP assembly and basal transcription, whereas the C-terminal domain is involved in interaction with transcriptional regulators and with upstream promoter elements.</text>
</comment>
<comment type="similarity">
    <text evidence="1">Belongs to the RNA polymerase alpha chain family.</text>
</comment>
<reference key="1">
    <citation type="journal article" date="2006" name="Mol. Microbiol.">
        <title>Role of pathogenicity island-associated integrases in the genome plasticity of uropathogenic Escherichia coli strain 536.</title>
        <authorList>
            <person name="Hochhut B."/>
            <person name="Wilde C."/>
            <person name="Balling G."/>
            <person name="Middendorf B."/>
            <person name="Dobrindt U."/>
            <person name="Brzuszkiewicz E."/>
            <person name="Gottschalk G."/>
            <person name="Carniel E."/>
            <person name="Hacker J."/>
        </authorList>
    </citation>
    <scope>NUCLEOTIDE SEQUENCE [LARGE SCALE GENOMIC DNA]</scope>
    <source>
        <strain>536 / UPEC</strain>
    </source>
</reference>
<evidence type="ECO:0000255" key="1">
    <source>
        <dbReference type="HAMAP-Rule" id="MF_00059"/>
    </source>
</evidence>
<protein>
    <recommendedName>
        <fullName evidence="1">DNA-directed RNA polymerase subunit alpha</fullName>
        <shortName evidence="1">RNAP subunit alpha</shortName>
        <ecNumber evidence="1">2.7.7.6</ecNumber>
    </recommendedName>
    <alternativeName>
        <fullName evidence="1">RNA polymerase subunit alpha</fullName>
    </alternativeName>
    <alternativeName>
        <fullName evidence="1">Transcriptase subunit alpha</fullName>
    </alternativeName>
</protein>
<accession>Q0TCG6</accession>
<name>RPOA_ECOL5</name>